<organism>
    <name type="scientific">Escherichia coli (strain K12 / MC4100 / BW2952)</name>
    <dbReference type="NCBI Taxonomy" id="595496"/>
    <lineage>
        <taxon>Bacteria</taxon>
        <taxon>Pseudomonadati</taxon>
        <taxon>Pseudomonadota</taxon>
        <taxon>Gammaproteobacteria</taxon>
        <taxon>Enterobacterales</taxon>
        <taxon>Enterobacteriaceae</taxon>
        <taxon>Escherichia</taxon>
    </lineage>
</organism>
<protein>
    <recommendedName>
        <fullName evidence="1">Phosphoribosylaminoimidazole-succinocarboxamide synthase</fullName>
        <ecNumber evidence="1">6.3.2.6</ecNumber>
    </recommendedName>
    <alternativeName>
        <fullName evidence="1">SAICAR synthetase</fullName>
    </alternativeName>
</protein>
<accession>C4ZX51</accession>
<reference key="1">
    <citation type="journal article" date="2009" name="J. Bacteriol.">
        <title>Genomic sequencing reveals regulatory mutations and recombinational events in the widely used MC4100 lineage of Escherichia coli K-12.</title>
        <authorList>
            <person name="Ferenci T."/>
            <person name="Zhou Z."/>
            <person name="Betteridge T."/>
            <person name="Ren Y."/>
            <person name="Liu Y."/>
            <person name="Feng L."/>
            <person name="Reeves P.R."/>
            <person name="Wang L."/>
        </authorList>
    </citation>
    <scope>NUCLEOTIDE SEQUENCE [LARGE SCALE GENOMIC DNA]</scope>
    <source>
        <strain>K12 / MC4100 / BW2952</strain>
    </source>
</reference>
<name>PUR7_ECOBW</name>
<evidence type="ECO:0000255" key="1">
    <source>
        <dbReference type="HAMAP-Rule" id="MF_00137"/>
    </source>
</evidence>
<comment type="catalytic activity">
    <reaction evidence="1">
        <text>5-amino-1-(5-phospho-D-ribosyl)imidazole-4-carboxylate + L-aspartate + ATP = (2S)-2-[5-amino-1-(5-phospho-beta-D-ribosyl)imidazole-4-carboxamido]succinate + ADP + phosphate + 2 H(+)</text>
        <dbReference type="Rhea" id="RHEA:22628"/>
        <dbReference type="ChEBI" id="CHEBI:15378"/>
        <dbReference type="ChEBI" id="CHEBI:29991"/>
        <dbReference type="ChEBI" id="CHEBI:30616"/>
        <dbReference type="ChEBI" id="CHEBI:43474"/>
        <dbReference type="ChEBI" id="CHEBI:58443"/>
        <dbReference type="ChEBI" id="CHEBI:77657"/>
        <dbReference type="ChEBI" id="CHEBI:456216"/>
        <dbReference type="EC" id="6.3.2.6"/>
    </reaction>
</comment>
<comment type="pathway">
    <text evidence="1">Purine metabolism; IMP biosynthesis via de novo pathway; 5-amino-1-(5-phospho-D-ribosyl)imidazole-4-carboxamide from 5-amino-1-(5-phospho-D-ribosyl)imidazole-4-carboxylate: step 1/2.</text>
</comment>
<comment type="similarity">
    <text evidence="1">Belongs to the SAICAR synthetase family.</text>
</comment>
<feature type="chain" id="PRO_1000203226" description="Phosphoribosylaminoimidazole-succinocarboxamide synthase">
    <location>
        <begin position="1"/>
        <end position="237"/>
    </location>
</feature>
<proteinExistence type="inferred from homology"/>
<sequence length="237" mass="26995">MQKQAELYRGKAKTVYSTENPDLLVLEFRNDTSAGDGARIEQFDRKGMVNNKFNYFIMSKLAEAGIPTQMERLLSDTECLVKKLDMVPVECVVRNRAAGSLVKRLGIEEGIELNPPLFDLFLKNDAMHDPMVNESYCETFGWVSKENLARMKELTYKANDVLKKLFDDAGLILVDFKLEFGLYKGEVVLGDEFSPDGSRLWDKETLEKMDKDRFRQSLGGLIEAYEAVARRLGVQLD</sequence>
<dbReference type="EC" id="6.3.2.6" evidence="1"/>
<dbReference type="EMBL" id="CP001396">
    <property type="protein sequence ID" value="ACR64057.1"/>
    <property type="molecule type" value="Genomic_DNA"/>
</dbReference>
<dbReference type="RefSeq" id="WP_001295467.1">
    <property type="nucleotide sequence ID" value="NC_012759.1"/>
</dbReference>
<dbReference type="SMR" id="C4ZX51"/>
<dbReference type="GeneID" id="89517285"/>
<dbReference type="KEGG" id="ebw:BWG_2240"/>
<dbReference type="HOGENOM" id="CLU_061495_2_1_6"/>
<dbReference type="UniPathway" id="UPA00074">
    <property type="reaction ID" value="UER00131"/>
</dbReference>
<dbReference type="GO" id="GO:0005829">
    <property type="term" value="C:cytosol"/>
    <property type="evidence" value="ECO:0007669"/>
    <property type="project" value="TreeGrafter"/>
</dbReference>
<dbReference type="GO" id="GO:0005524">
    <property type="term" value="F:ATP binding"/>
    <property type="evidence" value="ECO:0007669"/>
    <property type="project" value="UniProtKB-KW"/>
</dbReference>
<dbReference type="GO" id="GO:0004639">
    <property type="term" value="F:phosphoribosylaminoimidazolesuccinocarboxamide synthase activity"/>
    <property type="evidence" value="ECO:0007669"/>
    <property type="project" value="UniProtKB-UniRule"/>
</dbReference>
<dbReference type="GO" id="GO:0006189">
    <property type="term" value="P:'de novo' IMP biosynthetic process"/>
    <property type="evidence" value="ECO:0007669"/>
    <property type="project" value="UniProtKB-UniRule"/>
</dbReference>
<dbReference type="GO" id="GO:0009236">
    <property type="term" value="P:cobalamin biosynthetic process"/>
    <property type="evidence" value="ECO:0007669"/>
    <property type="project" value="InterPro"/>
</dbReference>
<dbReference type="CDD" id="cd01415">
    <property type="entry name" value="SAICAR_synt_PurC"/>
    <property type="match status" value="1"/>
</dbReference>
<dbReference type="FunFam" id="3.30.200.20:FF:000086">
    <property type="entry name" value="Phosphoribosylaminoimidazole-succinocarboxamide synthase"/>
    <property type="match status" value="1"/>
</dbReference>
<dbReference type="FunFam" id="3.30.470.20:FF:000006">
    <property type="entry name" value="Phosphoribosylaminoimidazole-succinocarboxamide synthase"/>
    <property type="match status" value="1"/>
</dbReference>
<dbReference type="Gene3D" id="3.30.470.20">
    <property type="entry name" value="ATP-grasp fold, B domain"/>
    <property type="match status" value="1"/>
</dbReference>
<dbReference type="Gene3D" id="3.30.200.20">
    <property type="entry name" value="Phosphorylase Kinase, domain 1"/>
    <property type="match status" value="1"/>
</dbReference>
<dbReference type="HAMAP" id="MF_00137">
    <property type="entry name" value="SAICAR_synth"/>
    <property type="match status" value="1"/>
</dbReference>
<dbReference type="InterPro" id="IPR028923">
    <property type="entry name" value="SAICAR_synt/ADE2_N"/>
</dbReference>
<dbReference type="InterPro" id="IPR033934">
    <property type="entry name" value="SAICAR_synt_PurC"/>
</dbReference>
<dbReference type="InterPro" id="IPR001636">
    <property type="entry name" value="SAICAR_synth"/>
</dbReference>
<dbReference type="InterPro" id="IPR050089">
    <property type="entry name" value="SAICAR_synthetase"/>
</dbReference>
<dbReference type="InterPro" id="IPR018236">
    <property type="entry name" value="SAICAR_synthetase_CS"/>
</dbReference>
<dbReference type="NCBIfam" id="TIGR00081">
    <property type="entry name" value="purC"/>
    <property type="match status" value="1"/>
</dbReference>
<dbReference type="PANTHER" id="PTHR43599">
    <property type="entry name" value="MULTIFUNCTIONAL PROTEIN ADE2"/>
    <property type="match status" value="1"/>
</dbReference>
<dbReference type="PANTHER" id="PTHR43599:SF3">
    <property type="entry name" value="SI:DKEY-6E2.2"/>
    <property type="match status" value="1"/>
</dbReference>
<dbReference type="Pfam" id="PF01259">
    <property type="entry name" value="SAICAR_synt"/>
    <property type="match status" value="1"/>
</dbReference>
<dbReference type="SUPFAM" id="SSF56104">
    <property type="entry name" value="SAICAR synthase-like"/>
    <property type="match status" value="1"/>
</dbReference>
<dbReference type="PROSITE" id="PS01057">
    <property type="entry name" value="SAICAR_SYNTHETASE_1"/>
    <property type="match status" value="1"/>
</dbReference>
<dbReference type="PROSITE" id="PS01058">
    <property type="entry name" value="SAICAR_SYNTHETASE_2"/>
    <property type="match status" value="1"/>
</dbReference>
<keyword id="KW-0067">ATP-binding</keyword>
<keyword id="KW-0436">Ligase</keyword>
<keyword id="KW-0547">Nucleotide-binding</keyword>
<keyword id="KW-0658">Purine biosynthesis</keyword>
<gene>
    <name evidence="1" type="primary">purC</name>
    <name type="ordered locus">BWG_2240</name>
</gene>